<accession>Q8VFC9</accession>
<reference key="1">
    <citation type="journal article" date="2002" name="Nat. Neurosci.">
        <title>The olfactory receptor gene superfamily of the mouse.</title>
        <authorList>
            <person name="Zhang X."/>
            <person name="Firestein S."/>
        </authorList>
    </citation>
    <scope>NUCLEOTIDE SEQUENCE [GENOMIC DNA]</scope>
</reference>
<reference key="2">
    <citation type="journal article" date="2002" name="Hum. Mol. Genet.">
        <title>Different evolutionary processes shaped the mouse and human olfactory receptor gene families.</title>
        <authorList>
            <person name="Young J.M."/>
            <person name="Friedman C."/>
            <person name="Williams E.M."/>
            <person name="Ross J.A."/>
            <person name="Tonnes-Priddy L."/>
            <person name="Trask B.J."/>
        </authorList>
    </citation>
    <scope>NUCLEOTIDE SEQUENCE [GENOMIC DNA]</scope>
</reference>
<reference key="3">
    <citation type="journal article" date="2002" name="Hum. Mol. Genet.">
        <authorList>
            <person name="Young J.M."/>
            <person name="Friedman C."/>
            <person name="Williams E.M."/>
            <person name="Ross J.A."/>
            <person name="Tonnes-Priddy L."/>
            <person name="Trask B.J."/>
        </authorList>
    </citation>
    <scope>ERRATUM OF PUBMED:11875048</scope>
</reference>
<name>O5P54_MOUSE</name>
<sequence>MNGGNHTSMTELFILGPTEDPTFCIAFFVIFLGVYMVTLVGNISIITLIRISSQLHTPVYLFLNHLAFVDILYSTLVSVIMLMELLEHELALPVAACAAELCITVLFGSSECFLLAAMAYDCYVAICSPLLYSTLMSSRVCFLLLGMSYVGGCMNGWIFTGCLLNLSFYGPYQIDHFFCDFSPLLKLSCSDVSIIGIIPSISSGSIIVVTVLVIAVFYICILMTILKMHSTDGCHKAFSTCNSYLTAVTLYYGTITFIYVMPKSNYSTEKNKVLSEFYTVVIPMLNHLIYSLKNRDVKDALRKAIVRVYT</sequence>
<feature type="chain" id="PRO_0000150834" description="Olfactory receptor 5P54">
    <location>
        <begin position="1"/>
        <end position="310"/>
    </location>
</feature>
<feature type="topological domain" description="Extracellular" evidence="1">
    <location>
        <begin position="1"/>
        <end position="25"/>
    </location>
</feature>
<feature type="transmembrane region" description="Helical; Name=1" evidence="1">
    <location>
        <begin position="26"/>
        <end position="46"/>
    </location>
</feature>
<feature type="topological domain" description="Cytoplasmic" evidence="1">
    <location>
        <begin position="47"/>
        <end position="54"/>
    </location>
</feature>
<feature type="transmembrane region" description="Helical; Name=2" evidence="1">
    <location>
        <begin position="55"/>
        <end position="75"/>
    </location>
</feature>
<feature type="topological domain" description="Extracellular" evidence="1">
    <location>
        <begin position="76"/>
        <end position="99"/>
    </location>
</feature>
<feature type="transmembrane region" description="Helical; Name=3" evidence="1">
    <location>
        <begin position="100"/>
        <end position="120"/>
    </location>
</feature>
<feature type="topological domain" description="Cytoplasmic" evidence="1">
    <location>
        <begin position="121"/>
        <end position="133"/>
    </location>
</feature>
<feature type="transmembrane region" description="Helical; Name=4" evidence="1">
    <location>
        <begin position="134"/>
        <end position="154"/>
    </location>
</feature>
<feature type="topological domain" description="Extracellular" evidence="1">
    <location>
        <begin position="155"/>
        <end position="196"/>
    </location>
</feature>
<feature type="transmembrane region" description="Helical; Name=5" evidence="1">
    <location>
        <begin position="197"/>
        <end position="217"/>
    </location>
</feature>
<feature type="topological domain" description="Cytoplasmic" evidence="1">
    <location>
        <begin position="218"/>
        <end position="237"/>
    </location>
</feature>
<feature type="transmembrane region" description="Helical; Name=6" evidence="1">
    <location>
        <begin position="238"/>
        <end position="258"/>
    </location>
</feature>
<feature type="topological domain" description="Extracellular" evidence="1">
    <location>
        <begin position="259"/>
        <end position="271"/>
    </location>
</feature>
<feature type="transmembrane region" description="Helical; Name=7" evidence="1">
    <location>
        <begin position="272"/>
        <end position="292"/>
    </location>
</feature>
<feature type="topological domain" description="Cytoplasmic" evidence="1">
    <location>
        <begin position="293"/>
        <end position="310"/>
    </location>
</feature>
<feature type="glycosylation site" description="N-linked (GlcNAc...) asparagine" evidence="1">
    <location>
        <position position="5"/>
    </location>
</feature>
<feature type="glycosylation site" description="N-linked (GlcNAc...) asparagine" evidence="1">
    <location>
        <position position="165"/>
    </location>
</feature>
<feature type="glycosylation site" description="N-linked (GlcNAc...) asparagine" evidence="1">
    <location>
        <position position="265"/>
    </location>
</feature>
<feature type="disulfide bond" evidence="2">
    <location>
        <begin position="97"/>
        <end position="189"/>
    </location>
</feature>
<comment type="function">
    <text>Potential odorant receptor.</text>
</comment>
<comment type="subcellular location">
    <subcellularLocation>
        <location evidence="3">Cell membrane</location>
        <topology evidence="1">Multi-pass membrane protein</topology>
    </subcellularLocation>
</comment>
<comment type="similarity">
    <text evidence="2">Belongs to the G-protein coupled receptor 1 family.</text>
</comment>
<gene>
    <name evidence="4" type="primary">Or5p54</name>
    <name evidence="4" type="synonym">Mor204-20</name>
    <name evidence="4" type="synonym">Olfr474</name>
</gene>
<dbReference type="EMBL" id="AY073602">
    <property type="protein sequence ID" value="AAL61265.1"/>
    <property type="molecule type" value="Genomic_DNA"/>
</dbReference>
<dbReference type="EMBL" id="AY317582">
    <property type="protein sequence ID" value="AAP70979.1"/>
    <property type="molecule type" value="Genomic_DNA"/>
</dbReference>
<dbReference type="CCDS" id="CCDS21697.1"/>
<dbReference type="RefSeq" id="NP_666706.1">
    <property type="nucleotide sequence ID" value="NM_146495.1"/>
</dbReference>
<dbReference type="SMR" id="Q8VFC9"/>
<dbReference type="FunCoup" id="Q8VFC9">
    <property type="interactions" value="1126"/>
</dbReference>
<dbReference type="STRING" id="10090.ENSMUSP00000055931"/>
<dbReference type="GlyCosmos" id="Q8VFC9">
    <property type="glycosylation" value="3 sites, No reported glycans"/>
</dbReference>
<dbReference type="GlyGen" id="Q8VFC9">
    <property type="glycosylation" value="3 sites"/>
</dbReference>
<dbReference type="PaxDb" id="10090-ENSMUSP00000055931"/>
<dbReference type="DNASU" id="258488"/>
<dbReference type="Ensembl" id="ENSMUST00000054434.4">
    <property type="protein sequence ID" value="ENSMUSP00000055931.4"/>
    <property type="gene ID" value="ENSMUSG00000094197.2"/>
</dbReference>
<dbReference type="GeneID" id="258488"/>
<dbReference type="KEGG" id="mmu:258488"/>
<dbReference type="UCSC" id="uc009jbq.1">
    <property type="organism name" value="mouse"/>
</dbReference>
<dbReference type="AGR" id="MGI:3030308"/>
<dbReference type="CTD" id="258488"/>
<dbReference type="MGI" id="MGI:3030308">
    <property type="gene designation" value="Or5p54"/>
</dbReference>
<dbReference type="VEuPathDB" id="HostDB:ENSMUSG00000094197"/>
<dbReference type="eggNOG" id="ENOG502SKA1">
    <property type="taxonomic scope" value="Eukaryota"/>
</dbReference>
<dbReference type="GeneTree" id="ENSGT01130000278279"/>
<dbReference type="HOGENOM" id="CLU_012526_8_1_1"/>
<dbReference type="InParanoid" id="Q8VFC9"/>
<dbReference type="OMA" id="AREEICI"/>
<dbReference type="OrthoDB" id="9598168at2759"/>
<dbReference type="PhylomeDB" id="Q8VFC9"/>
<dbReference type="TreeFam" id="TF338848"/>
<dbReference type="BioGRID-ORCS" id="258488">
    <property type="hits" value="1 hit in 72 CRISPR screens"/>
</dbReference>
<dbReference type="PRO" id="PR:Q8VFC9"/>
<dbReference type="Proteomes" id="UP000000589">
    <property type="component" value="Chromosome 7"/>
</dbReference>
<dbReference type="RNAct" id="Q8VFC9">
    <property type="molecule type" value="protein"/>
</dbReference>
<dbReference type="GO" id="GO:0016020">
    <property type="term" value="C:membrane"/>
    <property type="evidence" value="ECO:0000247"/>
    <property type="project" value="MGI"/>
</dbReference>
<dbReference type="GO" id="GO:0005886">
    <property type="term" value="C:plasma membrane"/>
    <property type="evidence" value="ECO:0007669"/>
    <property type="project" value="UniProtKB-SubCell"/>
</dbReference>
<dbReference type="GO" id="GO:0004930">
    <property type="term" value="F:G protein-coupled receptor activity"/>
    <property type="evidence" value="ECO:0007669"/>
    <property type="project" value="UniProtKB-KW"/>
</dbReference>
<dbReference type="GO" id="GO:0004984">
    <property type="term" value="F:olfactory receptor activity"/>
    <property type="evidence" value="ECO:0000247"/>
    <property type="project" value="MGI"/>
</dbReference>
<dbReference type="GO" id="GO:0007186">
    <property type="term" value="P:G protein-coupled receptor signaling pathway"/>
    <property type="evidence" value="ECO:0000247"/>
    <property type="project" value="MGI"/>
</dbReference>
<dbReference type="GO" id="GO:0007608">
    <property type="term" value="P:sensory perception of smell"/>
    <property type="evidence" value="ECO:0000247"/>
    <property type="project" value="MGI"/>
</dbReference>
<dbReference type="FunFam" id="1.20.1070.10:FF:000004">
    <property type="entry name" value="Olfactory receptor"/>
    <property type="match status" value="1"/>
</dbReference>
<dbReference type="Gene3D" id="1.20.1070.10">
    <property type="entry name" value="Rhodopsin 7-helix transmembrane proteins"/>
    <property type="match status" value="1"/>
</dbReference>
<dbReference type="InterPro" id="IPR000276">
    <property type="entry name" value="GPCR_Rhodpsn"/>
</dbReference>
<dbReference type="InterPro" id="IPR017452">
    <property type="entry name" value="GPCR_Rhodpsn_7TM"/>
</dbReference>
<dbReference type="InterPro" id="IPR000725">
    <property type="entry name" value="Olfact_rcpt"/>
</dbReference>
<dbReference type="PANTHER" id="PTHR48018">
    <property type="entry name" value="OLFACTORY RECEPTOR"/>
    <property type="match status" value="1"/>
</dbReference>
<dbReference type="Pfam" id="PF13853">
    <property type="entry name" value="7tm_4"/>
    <property type="match status" value="1"/>
</dbReference>
<dbReference type="PRINTS" id="PR00237">
    <property type="entry name" value="GPCRRHODOPSN"/>
</dbReference>
<dbReference type="PRINTS" id="PR00245">
    <property type="entry name" value="OLFACTORYR"/>
</dbReference>
<dbReference type="SUPFAM" id="SSF81321">
    <property type="entry name" value="Family A G protein-coupled receptor-like"/>
    <property type="match status" value="1"/>
</dbReference>
<dbReference type="PROSITE" id="PS50262">
    <property type="entry name" value="G_PROTEIN_RECEP_F1_2"/>
    <property type="match status" value="1"/>
</dbReference>
<evidence type="ECO:0000255" key="1"/>
<evidence type="ECO:0000255" key="2">
    <source>
        <dbReference type="PROSITE-ProRule" id="PRU00521"/>
    </source>
</evidence>
<evidence type="ECO:0000305" key="3"/>
<evidence type="ECO:0000312" key="4">
    <source>
        <dbReference type="MGI" id="MGI:3030308"/>
    </source>
</evidence>
<organism>
    <name type="scientific">Mus musculus</name>
    <name type="common">Mouse</name>
    <dbReference type="NCBI Taxonomy" id="10090"/>
    <lineage>
        <taxon>Eukaryota</taxon>
        <taxon>Metazoa</taxon>
        <taxon>Chordata</taxon>
        <taxon>Craniata</taxon>
        <taxon>Vertebrata</taxon>
        <taxon>Euteleostomi</taxon>
        <taxon>Mammalia</taxon>
        <taxon>Eutheria</taxon>
        <taxon>Euarchontoglires</taxon>
        <taxon>Glires</taxon>
        <taxon>Rodentia</taxon>
        <taxon>Myomorpha</taxon>
        <taxon>Muroidea</taxon>
        <taxon>Muridae</taxon>
        <taxon>Murinae</taxon>
        <taxon>Mus</taxon>
        <taxon>Mus</taxon>
    </lineage>
</organism>
<keyword id="KW-1003">Cell membrane</keyword>
<keyword id="KW-1015">Disulfide bond</keyword>
<keyword id="KW-0297">G-protein coupled receptor</keyword>
<keyword id="KW-0325">Glycoprotein</keyword>
<keyword id="KW-0472">Membrane</keyword>
<keyword id="KW-0552">Olfaction</keyword>
<keyword id="KW-0675">Receptor</keyword>
<keyword id="KW-1185">Reference proteome</keyword>
<keyword id="KW-0716">Sensory transduction</keyword>
<keyword id="KW-0807">Transducer</keyword>
<keyword id="KW-0812">Transmembrane</keyword>
<keyword id="KW-1133">Transmembrane helix</keyword>
<proteinExistence type="inferred from homology"/>
<protein>
    <recommendedName>
        <fullName evidence="3">Olfactory receptor 5P54</fullName>
    </recommendedName>
    <alternativeName>
        <fullName>Olfactory receptor 204-20</fullName>
    </alternativeName>
    <alternativeName>
        <fullName>Olfactory receptor 474</fullName>
    </alternativeName>
</protein>